<sequence length="139" mass="15876">MTHSLVCPETVSRVSSVLNRNTRQFGKKHLFDQDEETCWNSDQGPSQWVTLEFPQLIRVSQLQIQFQGGFSSRRGCLEGSQGTQALHKIVDFYPEDNNSLQTFPIPAAEVDRLKVTFEDATDFFGRVVIYHLRVLGEKV</sequence>
<keyword id="KW-0025">Alternative splicing</keyword>
<keyword id="KW-0539">Nucleus</keyword>
<keyword id="KW-1267">Proteomics identification</keyword>
<keyword id="KW-1185">Reference proteome</keyword>
<reference key="1">
    <citation type="journal article" date="2003" name="J. Biol. Chem.">
        <title>Identification of a novel testicular orphan receptor-4 (TR4)-associated protein as repressor for the selective suppression of TR4-mediated transactivation.</title>
        <authorList>
            <person name="Yang Y."/>
            <person name="Wang X."/>
            <person name="Dong T."/>
            <person name="Kim E."/>
            <person name="Lin W.-J."/>
            <person name="Chang C."/>
        </authorList>
    </citation>
    <scope>NUCLEOTIDE SEQUENCE [MRNA] (ISOFORM 1)</scope>
    <scope>FUNCTION</scope>
    <scope>INTERACTION WITH NR2C2</scope>
    <scope>SUBCELLULAR LOCATION</scope>
    <scope>TISSUE SPECIFICITY</scope>
</reference>
<reference key="2">
    <citation type="journal article" date="2004" name="Nat. Genet.">
        <title>Complete sequencing and characterization of 21,243 full-length human cDNAs.</title>
        <authorList>
            <person name="Ota T."/>
            <person name="Suzuki Y."/>
            <person name="Nishikawa T."/>
            <person name="Otsuki T."/>
            <person name="Sugiyama T."/>
            <person name="Irie R."/>
            <person name="Wakamatsu A."/>
            <person name="Hayashi K."/>
            <person name="Sato H."/>
            <person name="Nagai K."/>
            <person name="Kimura K."/>
            <person name="Makita H."/>
            <person name="Sekine M."/>
            <person name="Obayashi M."/>
            <person name="Nishi T."/>
            <person name="Shibahara T."/>
            <person name="Tanaka T."/>
            <person name="Ishii S."/>
            <person name="Yamamoto J."/>
            <person name="Saito K."/>
            <person name="Kawai Y."/>
            <person name="Isono Y."/>
            <person name="Nakamura Y."/>
            <person name="Nagahari K."/>
            <person name="Murakami K."/>
            <person name="Yasuda T."/>
            <person name="Iwayanagi T."/>
            <person name="Wagatsuma M."/>
            <person name="Shiratori A."/>
            <person name="Sudo H."/>
            <person name="Hosoiri T."/>
            <person name="Kaku Y."/>
            <person name="Kodaira H."/>
            <person name="Kondo H."/>
            <person name="Sugawara M."/>
            <person name="Takahashi M."/>
            <person name="Kanda K."/>
            <person name="Yokoi T."/>
            <person name="Furuya T."/>
            <person name="Kikkawa E."/>
            <person name="Omura Y."/>
            <person name="Abe K."/>
            <person name="Kamihara K."/>
            <person name="Katsuta N."/>
            <person name="Sato K."/>
            <person name="Tanikawa M."/>
            <person name="Yamazaki M."/>
            <person name="Ninomiya K."/>
            <person name="Ishibashi T."/>
            <person name="Yamashita H."/>
            <person name="Murakawa K."/>
            <person name="Fujimori K."/>
            <person name="Tanai H."/>
            <person name="Kimata M."/>
            <person name="Watanabe M."/>
            <person name="Hiraoka S."/>
            <person name="Chiba Y."/>
            <person name="Ishida S."/>
            <person name="Ono Y."/>
            <person name="Takiguchi S."/>
            <person name="Watanabe S."/>
            <person name="Yosida M."/>
            <person name="Hotuta T."/>
            <person name="Kusano J."/>
            <person name="Kanehori K."/>
            <person name="Takahashi-Fujii A."/>
            <person name="Hara H."/>
            <person name="Tanase T.-O."/>
            <person name="Nomura Y."/>
            <person name="Togiya S."/>
            <person name="Komai F."/>
            <person name="Hara R."/>
            <person name="Takeuchi K."/>
            <person name="Arita M."/>
            <person name="Imose N."/>
            <person name="Musashino K."/>
            <person name="Yuuki H."/>
            <person name="Oshima A."/>
            <person name="Sasaki N."/>
            <person name="Aotsuka S."/>
            <person name="Yoshikawa Y."/>
            <person name="Matsunawa H."/>
            <person name="Ichihara T."/>
            <person name="Shiohata N."/>
            <person name="Sano S."/>
            <person name="Moriya S."/>
            <person name="Momiyama H."/>
            <person name="Satoh N."/>
            <person name="Takami S."/>
            <person name="Terashima Y."/>
            <person name="Suzuki O."/>
            <person name="Nakagawa S."/>
            <person name="Senoh A."/>
            <person name="Mizoguchi H."/>
            <person name="Goto Y."/>
            <person name="Shimizu F."/>
            <person name="Wakebe H."/>
            <person name="Hishigaki H."/>
            <person name="Watanabe T."/>
            <person name="Sugiyama A."/>
            <person name="Takemoto M."/>
            <person name="Kawakami B."/>
            <person name="Yamazaki M."/>
            <person name="Watanabe K."/>
            <person name="Kumagai A."/>
            <person name="Itakura S."/>
            <person name="Fukuzumi Y."/>
            <person name="Fujimori Y."/>
            <person name="Komiyama M."/>
            <person name="Tashiro H."/>
            <person name="Tanigami A."/>
            <person name="Fujiwara T."/>
            <person name="Ono T."/>
            <person name="Yamada K."/>
            <person name="Fujii Y."/>
            <person name="Ozaki K."/>
            <person name="Hirao M."/>
            <person name="Ohmori Y."/>
            <person name="Kawabata A."/>
            <person name="Hikiji T."/>
            <person name="Kobatake N."/>
            <person name="Inagaki H."/>
            <person name="Ikema Y."/>
            <person name="Okamoto S."/>
            <person name="Okitani R."/>
            <person name="Kawakami T."/>
            <person name="Noguchi S."/>
            <person name="Itoh T."/>
            <person name="Shigeta K."/>
            <person name="Senba T."/>
            <person name="Matsumura K."/>
            <person name="Nakajima Y."/>
            <person name="Mizuno T."/>
            <person name="Morinaga M."/>
            <person name="Sasaki M."/>
            <person name="Togashi T."/>
            <person name="Oyama M."/>
            <person name="Hata H."/>
            <person name="Watanabe M."/>
            <person name="Komatsu T."/>
            <person name="Mizushima-Sugano J."/>
            <person name="Satoh T."/>
            <person name="Shirai Y."/>
            <person name="Takahashi Y."/>
            <person name="Nakagawa K."/>
            <person name="Okumura K."/>
            <person name="Nagase T."/>
            <person name="Nomura N."/>
            <person name="Kikuchi H."/>
            <person name="Masuho Y."/>
            <person name="Yamashita R."/>
            <person name="Nakai K."/>
            <person name="Yada T."/>
            <person name="Nakamura Y."/>
            <person name="Ohara O."/>
            <person name="Isogai T."/>
            <person name="Sugano S."/>
        </authorList>
    </citation>
    <scope>NUCLEOTIDE SEQUENCE [LARGE SCALE MRNA] (ISOFORM 2)</scope>
    <source>
        <tissue>Synovium</tissue>
    </source>
</reference>
<reference key="3">
    <citation type="journal article" date="2004" name="Nature">
        <title>The DNA sequence and biology of human chromosome 19.</title>
        <authorList>
            <person name="Grimwood J."/>
            <person name="Gordon L.A."/>
            <person name="Olsen A.S."/>
            <person name="Terry A."/>
            <person name="Schmutz J."/>
            <person name="Lamerdin J.E."/>
            <person name="Hellsten U."/>
            <person name="Goodstein D."/>
            <person name="Couronne O."/>
            <person name="Tran-Gyamfi M."/>
            <person name="Aerts A."/>
            <person name="Altherr M."/>
            <person name="Ashworth L."/>
            <person name="Bajorek E."/>
            <person name="Black S."/>
            <person name="Branscomb E."/>
            <person name="Caenepeel S."/>
            <person name="Carrano A.V."/>
            <person name="Caoile C."/>
            <person name="Chan Y.M."/>
            <person name="Christensen M."/>
            <person name="Cleland C.A."/>
            <person name="Copeland A."/>
            <person name="Dalin E."/>
            <person name="Dehal P."/>
            <person name="Denys M."/>
            <person name="Detter J.C."/>
            <person name="Escobar J."/>
            <person name="Flowers D."/>
            <person name="Fotopulos D."/>
            <person name="Garcia C."/>
            <person name="Georgescu A.M."/>
            <person name="Glavina T."/>
            <person name="Gomez M."/>
            <person name="Gonzales E."/>
            <person name="Groza M."/>
            <person name="Hammon N."/>
            <person name="Hawkins T."/>
            <person name="Haydu L."/>
            <person name="Ho I."/>
            <person name="Huang W."/>
            <person name="Israni S."/>
            <person name="Jett J."/>
            <person name="Kadner K."/>
            <person name="Kimball H."/>
            <person name="Kobayashi A."/>
            <person name="Larionov V."/>
            <person name="Leem S.-H."/>
            <person name="Lopez F."/>
            <person name="Lou Y."/>
            <person name="Lowry S."/>
            <person name="Malfatti S."/>
            <person name="Martinez D."/>
            <person name="McCready P.M."/>
            <person name="Medina C."/>
            <person name="Morgan J."/>
            <person name="Nelson K."/>
            <person name="Nolan M."/>
            <person name="Ovcharenko I."/>
            <person name="Pitluck S."/>
            <person name="Pollard M."/>
            <person name="Popkie A.P."/>
            <person name="Predki P."/>
            <person name="Quan G."/>
            <person name="Ramirez L."/>
            <person name="Rash S."/>
            <person name="Retterer J."/>
            <person name="Rodriguez A."/>
            <person name="Rogers S."/>
            <person name="Salamov A."/>
            <person name="Salazar A."/>
            <person name="She X."/>
            <person name="Smith D."/>
            <person name="Slezak T."/>
            <person name="Solovyev V."/>
            <person name="Thayer N."/>
            <person name="Tice H."/>
            <person name="Tsai M."/>
            <person name="Ustaszewska A."/>
            <person name="Vo N."/>
            <person name="Wagner M."/>
            <person name="Wheeler J."/>
            <person name="Wu K."/>
            <person name="Xie G."/>
            <person name="Yang J."/>
            <person name="Dubchak I."/>
            <person name="Furey T.S."/>
            <person name="DeJong P."/>
            <person name="Dickson M."/>
            <person name="Gordon D."/>
            <person name="Eichler E.E."/>
            <person name="Pennacchio L.A."/>
            <person name="Richardson P."/>
            <person name="Stubbs L."/>
            <person name="Rokhsar D.S."/>
            <person name="Myers R.M."/>
            <person name="Rubin E.M."/>
            <person name="Lucas S.M."/>
        </authorList>
    </citation>
    <scope>NUCLEOTIDE SEQUENCE [LARGE SCALE GENOMIC DNA]</scope>
</reference>
<reference key="4">
    <citation type="journal article" date="2004" name="Genome Res.">
        <title>The status, quality, and expansion of the NIH full-length cDNA project: the Mammalian Gene Collection (MGC).</title>
        <authorList>
            <consortium name="The MGC Project Team"/>
        </authorList>
    </citation>
    <scope>NUCLEOTIDE SEQUENCE [LARGE SCALE MRNA] (ISOFORM 1)</scope>
    <source>
        <tissue>Placenta</tissue>
    </source>
</reference>
<reference key="5">
    <citation type="journal article" date="2011" name="BMC Syst. Biol.">
        <title>Initial characterization of the human central proteome.</title>
        <authorList>
            <person name="Burkard T.R."/>
            <person name="Planyavsky M."/>
            <person name="Kaupe I."/>
            <person name="Breitwieser F.P."/>
            <person name="Buerckstuemmer T."/>
            <person name="Bennett K.L."/>
            <person name="Superti-Furga G."/>
            <person name="Colinge J."/>
        </authorList>
    </citation>
    <scope>IDENTIFICATION BY MASS SPECTROMETRY [LARGE SCALE ANALYSIS]</scope>
</reference>
<gene>
    <name type="primary">NR2C2AP</name>
    <name type="synonym">TRA16</name>
</gene>
<proteinExistence type="evidence at protein level"/>
<feature type="chain" id="PRO_0000295585" description="Nuclear receptor 2C2-associated protein">
    <location>
        <begin position="1"/>
        <end position="139"/>
    </location>
</feature>
<feature type="splice variant" id="VSP_056072" description="In isoform 2." evidence="2">
    <original>V</original>
    <variation>GTNRDPCRDLHYRAKLGEPRTHPRNLNFP</variation>
    <location>
        <position position="139"/>
    </location>
</feature>
<comment type="function">
    <text evidence="1">May act as a repressor of NR2C2-mediated transactivation by suppressing the binding between NR2C2/TR4 and the TR4-response element in target genes.</text>
</comment>
<comment type="subunit">
    <text evidence="1">Interacts with NR2C2/TR4.</text>
</comment>
<comment type="interaction">
    <interactant intactId="EBI-10260040">
        <id>Q86WQ0</id>
    </interactant>
    <interactant intactId="EBI-742054">
        <id>Q96D03</id>
        <label>DDIT4L</label>
    </interactant>
    <organismsDiffer>false</organismsDiffer>
    <experiments>3</experiments>
</comment>
<comment type="interaction">
    <interactant intactId="EBI-10260040">
        <id>Q86WQ0</id>
    </interactant>
    <interactant intactId="EBI-466029">
        <id>P42858</id>
        <label>HTT</label>
    </interactant>
    <organismsDiffer>false</organismsDiffer>
    <experiments>3</experiments>
</comment>
<comment type="interaction">
    <interactant intactId="EBI-10260040">
        <id>Q86WQ0</id>
    </interactant>
    <interactant intactId="EBI-20709881">
        <id>P49116-2</id>
        <label>NR2C2</label>
    </interactant>
    <organismsDiffer>false</organismsDiffer>
    <experiments>5</experiments>
</comment>
<comment type="interaction">
    <interactant intactId="EBI-10260040">
        <id>Q86WQ0</id>
    </interactant>
    <interactant intactId="EBI-307352">
        <id>Q04864</id>
        <label>REL</label>
    </interactant>
    <organismsDiffer>false</organismsDiffer>
    <experiments>3</experiments>
</comment>
<comment type="interaction">
    <interactant intactId="EBI-10260040">
        <id>Q86WQ0</id>
    </interactant>
    <interactant intactId="EBI-10829018">
        <id>Q04864-2</id>
        <label>REL</label>
    </interactant>
    <organismsDiffer>false</organismsDiffer>
    <experiments>3</experiments>
</comment>
<comment type="interaction">
    <interactant intactId="EBI-10260040">
        <id>Q86WQ0</id>
    </interactant>
    <interactant intactId="EBI-7600166">
        <id>O15427</id>
        <label>SLC16A3</label>
    </interactant>
    <organismsDiffer>false</organismsDiffer>
    <experiments>3</experiments>
</comment>
<comment type="interaction">
    <interactant intactId="EBI-10260040">
        <id>Q86WQ0</id>
    </interactant>
    <interactant intactId="EBI-533224">
        <id>P15884</id>
        <label>TCF4</label>
    </interactant>
    <organismsDiffer>false</organismsDiffer>
    <experiments>3</experiments>
</comment>
<comment type="interaction">
    <interactant intactId="EBI-10260040">
        <id>Q86WQ0</id>
    </interactant>
    <interactant intactId="EBI-11139477">
        <id>Q96N21</id>
        <label>TEPSIN</label>
    </interactant>
    <organismsDiffer>false</organismsDiffer>
    <experiments>3</experiments>
</comment>
<comment type="interaction">
    <interactant intactId="EBI-10260040">
        <id>Q86WQ0</id>
    </interactant>
    <interactant intactId="EBI-2799833">
        <id>Q8N1B4</id>
        <label>VPS52</label>
    </interactant>
    <organismsDiffer>false</organismsDiffer>
    <experiments>3</experiments>
</comment>
<comment type="subcellular location">
    <subcellularLocation>
        <location evidence="1">Nucleus</location>
    </subcellularLocation>
</comment>
<comment type="alternative products">
    <event type="alternative splicing"/>
    <isoform>
        <id>Q86WQ0-1</id>
        <name>1</name>
        <sequence type="displayed"/>
    </isoform>
    <isoform>
        <id>Q86WQ0-2</id>
        <name>2</name>
        <sequence type="described" ref="VSP_056072"/>
    </isoform>
</comment>
<comment type="tissue specificity">
    <text evidence="1">Expressed in all tissues examined, with highest expression in heart, skeletal muscle and pancreas.</text>
</comment>
<comment type="similarity">
    <text evidence="3">Belongs to the NR2C2AP family.</text>
</comment>
<evidence type="ECO:0000269" key="1">
    <source>
    </source>
</evidence>
<evidence type="ECO:0000303" key="2">
    <source>
    </source>
</evidence>
<evidence type="ECO:0000305" key="3"/>
<name>NR2CA_HUMAN</name>
<organism>
    <name type="scientific">Homo sapiens</name>
    <name type="common">Human</name>
    <dbReference type="NCBI Taxonomy" id="9606"/>
    <lineage>
        <taxon>Eukaryota</taxon>
        <taxon>Metazoa</taxon>
        <taxon>Chordata</taxon>
        <taxon>Craniata</taxon>
        <taxon>Vertebrata</taxon>
        <taxon>Euteleostomi</taxon>
        <taxon>Mammalia</taxon>
        <taxon>Eutheria</taxon>
        <taxon>Euarchontoglires</taxon>
        <taxon>Primates</taxon>
        <taxon>Haplorrhini</taxon>
        <taxon>Catarrhini</taxon>
        <taxon>Hominidae</taxon>
        <taxon>Homo</taxon>
    </lineage>
</organism>
<protein>
    <recommendedName>
        <fullName>Nuclear receptor 2C2-associated protein</fullName>
    </recommendedName>
    <alternativeName>
        <fullName>TR4 orphan receptor-associated 16 kDa protein</fullName>
    </alternativeName>
</protein>
<accession>Q86WQ0</accession>
<accession>A6NGP7</accession>
<accession>B4DW92</accession>
<dbReference type="EMBL" id="AY101377">
    <property type="protein sequence ID" value="AAM48286.1"/>
    <property type="molecule type" value="mRNA"/>
</dbReference>
<dbReference type="EMBL" id="AK301426">
    <property type="protein sequence ID" value="BAG62954.1"/>
    <property type="molecule type" value="mRNA"/>
</dbReference>
<dbReference type="EMBL" id="AC003110">
    <property type="status" value="NOT_ANNOTATED_CDS"/>
    <property type="molecule type" value="Genomic_DNA"/>
</dbReference>
<dbReference type="EMBL" id="BC057837">
    <property type="protein sequence ID" value="AAH57837.1"/>
    <property type="molecule type" value="mRNA"/>
</dbReference>
<dbReference type="CCDS" id="CCDS32967.1">
    <molecule id="Q86WQ0-1"/>
</dbReference>
<dbReference type="CCDS" id="CCDS74316.1">
    <molecule id="Q86WQ0-2"/>
</dbReference>
<dbReference type="RefSeq" id="NP_001287874.1">
    <molecule id="Q86WQ0-2"/>
    <property type="nucleotide sequence ID" value="NM_001300945.2"/>
</dbReference>
<dbReference type="RefSeq" id="NP_795361.1">
    <molecule id="Q86WQ0-1"/>
    <property type="nucleotide sequence ID" value="NM_176880.6"/>
</dbReference>
<dbReference type="SMR" id="Q86WQ0"/>
<dbReference type="BioGRID" id="125987">
    <property type="interactions" value="13"/>
</dbReference>
<dbReference type="FunCoup" id="Q86WQ0">
    <property type="interactions" value="868"/>
</dbReference>
<dbReference type="IntAct" id="Q86WQ0">
    <property type="interactions" value="8"/>
</dbReference>
<dbReference type="STRING" id="9606.ENSP00000402756"/>
<dbReference type="iPTMnet" id="Q86WQ0"/>
<dbReference type="PhosphoSitePlus" id="Q86WQ0"/>
<dbReference type="BioMuta" id="NR2C2AP"/>
<dbReference type="jPOST" id="Q86WQ0"/>
<dbReference type="MassIVE" id="Q86WQ0"/>
<dbReference type="PaxDb" id="9606-ENSP00000402756"/>
<dbReference type="PeptideAtlas" id="Q86WQ0"/>
<dbReference type="ProteomicsDB" id="5323"/>
<dbReference type="ProteomicsDB" id="70189">
    <molecule id="Q86WQ0-1"/>
</dbReference>
<dbReference type="Pumba" id="Q86WQ0"/>
<dbReference type="TopDownProteomics" id="Q86WQ0-1">
    <molecule id="Q86WQ0-1"/>
</dbReference>
<dbReference type="Antibodypedia" id="28401">
    <property type="antibodies" value="153 antibodies from 22 providers"/>
</dbReference>
<dbReference type="DNASU" id="126382"/>
<dbReference type="Ensembl" id="ENST00000331552.12">
    <molecule id="Q86WQ0-1"/>
    <property type="protein sequence ID" value="ENSP00000332823.6"/>
    <property type="gene ID" value="ENSG00000184162.15"/>
</dbReference>
<dbReference type="Ensembl" id="ENST00000420605.7">
    <molecule id="Q86WQ0-2"/>
    <property type="protein sequence ID" value="ENSP00000402756.1"/>
    <property type="gene ID" value="ENSG00000184162.15"/>
</dbReference>
<dbReference type="GeneID" id="126382"/>
<dbReference type="KEGG" id="hsa:126382"/>
<dbReference type="MANE-Select" id="ENST00000331552.12">
    <property type="protein sequence ID" value="ENSP00000332823.6"/>
    <property type="RefSeq nucleotide sequence ID" value="NM_176880.6"/>
    <property type="RefSeq protein sequence ID" value="NP_795361.1"/>
</dbReference>
<dbReference type="UCSC" id="uc002nlx.4">
    <molecule id="Q86WQ0-1"/>
    <property type="organism name" value="human"/>
</dbReference>
<dbReference type="AGR" id="HGNC:30763"/>
<dbReference type="CTD" id="126382"/>
<dbReference type="DisGeNET" id="126382"/>
<dbReference type="GeneCards" id="NR2C2AP"/>
<dbReference type="HGNC" id="HGNC:30763">
    <property type="gene designation" value="NR2C2AP"/>
</dbReference>
<dbReference type="HPA" id="ENSG00000184162">
    <property type="expression patterns" value="Low tissue specificity"/>
</dbReference>
<dbReference type="MalaCards" id="NR2C2AP"/>
<dbReference type="MIM" id="608719">
    <property type="type" value="gene"/>
</dbReference>
<dbReference type="neXtProt" id="NX_Q86WQ0"/>
<dbReference type="OpenTargets" id="ENSG00000184162"/>
<dbReference type="PharmGKB" id="PA162398172"/>
<dbReference type="VEuPathDB" id="HostDB:ENSG00000184162"/>
<dbReference type="eggNOG" id="ENOG502RZAY">
    <property type="taxonomic scope" value="Eukaryota"/>
</dbReference>
<dbReference type="GeneTree" id="ENSGT00390000017748"/>
<dbReference type="HOGENOM" id="CLU_133965_0_0_1"/>
<dbReference type="InParanoid" id="Q86WQ0"/>
<dbReference type="OMA" id="FFGRITV"/>
<dbReference type="OrthoDB" id="10052260at2759"/>
<dbReference type="PAN-GO" id="Q86WQ0">
    <property type="GO annotations" value="0 GO annotations based on evolutionary models"/>
</dbReference>
<dbReference type="PhylomeDB" id="Q86WQ0"/>
<dbReference type="TreeFam" id="TF300180"/>
<dbReference type="PathwayCommons" id="Q86WQ0"/>
<dbReference type="Reactome" id="R-HSA-383280">
    <property type="pathway name" value="Nuclear Receptor transcription pathway"/>
</dbReference>
<dbReference type="SignaLink" id="Q86WQ0"/>
<dbReference type="BioGRID-ORCS" id="126382">
    <property type="hits" value="351 hits in 1182 CRISPR screens"/>
</dbReference>
<dbReference type="ChiTaRS" id="NR2C2AP">
    <property type="organism name" value="human"/>
</dbReference>
<dbReference type="GenomeRNAi" id="126382"/>
<dbReference type="Pharos" id="Q86WQ0">
    <property type="development level" value="Tbio"/>
</dbReference>
<dbReference type="PRO" id="PR:Q86WQ0"/>
<dbReference type="Proteomes" id="UP000005640">
    <property type="component" value="Chromosome 19"/>
</dbReference>
<dbReference type="RNAct" id="Q86WQ0">
    <property type="molecule type" value="protein"/>
</dbReference>
<dbReference type="Bgee" id="ENSG00000184162">
    <property type="expression patterns" value="Expressed in cortical plate and 152 other cell types or tissues"/>
</dbReference>
<dbReference type="ExpressionAtlas" id="Q86WQ0">
    <property type="expression patterns" value="baseline and differential"/>
</dbReference>
<dbReference type="GO" id="GO:0005654">
    <property type="term" value="C:nucleoplasm"/>
    <property type="evidence" value="ECO:0000314"/>
    <property type="project" value="HPA"/>
</dbReference>
<dbReference type="FunFam" id="2.60.120.260:FF:000070">
    <property type="entry name" value="Nuclear receptor 2C2-associated protein"/>
    <property type="match status" value="1"/>
</dbReference>
<dbReference type="Gene3D" id="2.60.120.260">
    <property type="entry name" value="Galactose-binding domain-like"/>
    <property type="match status" value="1"/>
</dbReference>
<dbReference type="InterPro" id="IPR008979">
    <property type="entry name" value="Galactose-bd-like_sf"/>
</dbReference>
<dbReference type="SUPFAM" id="SSF49785">
    <property type="entry name" value="Galactose-binding domain-like"/>
    <property type="match status" value="1"/>
</dbReference>